<accession>A1YEV8</accession>
<sequence length="184" mass="20041">MFLSPGEGPATEGGGLGPGEEAPKKKHRRNRTTFTTYQLHQLERAFEASHYPDVYSREELAAKVHLPEVRVQVWFQNRRAKWRRQERLESGSGAVAAPXLPEAPALPFARPPAMSLPLEPWLGPGPPAVPGLPRLLGPGPGLQASFGPHAFAPTFADGFALEEASLRLLAKEHAQALDRAWPPA</sequence>
<dbReference type="EMBL" id="DQ976473">
    <property type="protein sequence ID" value="ABM46676.1"/>
    <property type="molecule type" value="Genomic_DNA"/>
</dbReference>
<dbReference type="STRING" id="9593.ENSGGOP00000014366"/>
<dbReference type="eggNOG" id="KOG0490">
    <property type="taxonomic scope" value="Eukaryota"/>
</dbReference>
<dbReference type="InParanoid" id="A1YEV8"/>
<dbReference type="Proteomes" id="UP000001519">
    <property type="component" value="Unplaced"/>
</dbReference>
<dbReference type="GO" id="GO:0005634">
    <property type="term" value="C:nucleus"/>
    <property type="evidence" value="ECO:0007669"/>
    <property type="project" value="UniProtKB-SubCell"/>
</dbReference>
<dbReference type="GO" id="GO:0000981">
    <property type="term" value="F:DNA-binding transcription factor activity, RNA polymerase II-specific"/>
    <property type="evidence" value="ECO:0000318"/>
    <property type="project" value="GO_Central"/>
</dbReference>
<dbReference type="GO" id="GO:0000978">
    <property type="term" value="F:RNA polymerase II cis-regulatory region sequence-specific DNA binding"/>
    <property type="evidence" value="ECO:0000318"/>
    <property type="project" value="GO_Central"/>
</dbReference>
<dbReference type="GO" id="GO:0045944">
    <property type="term" value="P:positive regulation of transcription by RNA polymerase II"/>
    <property type="evidence" value="ECO:0007669"/>
    <property type="project" value="InterPro"/>
</dbReference>
<dbReference type="GO" id="GO:0006357">
    <property type="term" value="P:regulation of transcription by RNA polymerase II"/>
    <property type="evidence" value="ECO:0000318"/>
    <property type="project" value="GO_Central"/>
</dbReference>
<dbReference type="GO" id="GO:0007601">
    <property type="term" value="P:visual perception"/>
    <property type="evidence" value="ECO:0007669"/>
    <property type="project" value="UniProtKB-KW"/>
</dbReference>
<dbReference type="CDD" id="cd00086">
    <property type="entry name" value="homeodomain"/>
    <property type="match status" value="1"/>
</dbReference>
<dbReference type="FunFam" id="1.10.10.60:FF:000071">
    <property type="entry name" value="Retinal homeobox gene 2"/>
    <property type="match status" value="1"/>
</dbReference>
<dbReference type="Gene3D" id="1.10.10.60">
    <property type="entry name" value="Homeodomain-like"/>
    <property type="match status" value="1"/>
</dbReference>
<dbReference type="InterPro" id="IPR001356">
    <property type="entry name" value="HD"/>
</dbReference>
<dbReference type="InterPro" id="IPR017970">
    <property type="entry name" value="Homeobox_CS"/>
</dbReference>
<dbReference type="InterPro" id="IPR009057">
    <property type="entry name" value="Homeodomain-like_sf"/>
</dbReference>
<dbReference type="InterPro" id="IPR043562">
    <property type="entry name" value="RAX/RAX2"/>
</dbReference>
<dbReference type="PANTHER" id="PTHR46271">
    <property type="entry name" value="HOMEOBOX PROTEIN, PUTATIVE-RELATED"/>
    <property type="match status" value="1"/>
</dbReference>
<dbReference type="PANTHER" id="PTHR46271:SF2">
    <property type="entry name" value="RETINA AND ANTERIOR NEURAL FOLD HOMEOBOX PROTEIN 2"/>
    <property type="match status" value="1"/>
</dbReference>
<dbReference type="Pfam" id="PF00046">
    <property type="entry name" value="Homeodomain"/>
    <property type="match status" value="1"/>
</dbReference>
<dbReference type="SMART" id="SM00389">
    <property type="entry name" value="HOX"/>
    <property type="match status" value="1"/>
</dbReference>
<dbReference type="SUPFAM" id="SSF46689">
    <property type="entry name" value="Homeodomain-like"/>
    <property type="match status" value="1"/>
</dbReference>
<dbReference type="PROSITE" id="PS00027">
    <property type="entry name" value="HOMEOBOX_1"/>
    <property type="match status" value="1"/>
</dbReference>
<dbReference type="PROSITE" id="PS50071">
    <property type="entry name" value="HOMEOBOX_2"/>
    <property type="match status" value="1"/>
</dbReference>
<feature type="chain" id="PRO_0000285047" description="Retina and anterior neural fold homeobox protein 2">
    <location>
        <begin position="1"/>
        <end position="184"/>
    </location>
</feature>
<feature type="DNA-binding region" description="Homeobox" evidence="2">
    <location>
        <begin position="27"/>
        <end position="86"/>
    </location>
</feature>
<feature type="region of interest" description="Disordered" evidence="3">
    <location>
        <begin position="1"/>
        <end position="33"/>
    </location>
</feature>
<feature type="compositionally biased region" description="Low complexity" evidence="3">
    <location>
        <begin position="1"/>
        <end position="10"/>
    </location>
</feature>
<keyword id="KW-0238">DNA-binding</keyword>
<keyword id="KW-0371">Homeobox</keyword>
<keyword id="KW-0539">Nucleus</keyword>
<keyword id="KW-1185">Reference proteome</keyword>
<keyword id="KW-0716">Sensory transduction</keyword>
<keyword id="KW-0804">Transcription</keyword>
<keyword id="KW-0805">Transcription regulation</keyword>
<keyword id="KW-0844">Vision</keyword>
<gene>
    <name type="primary">RAX2</name>
    <name type="synonym">RAXL1</name>
</gene>
<evidence type="ECO:0000250" key="1"/>
<evidence type="ECO:0000255" key="2">
    <source>
        <dbReference type="PROSITE-ProRule" id="PRU00108"/>
    </source>
</evidence>
<evidence type="ECO:0000256" key="3">
    <source>
        <dbReference type="SAM" id="MobiDB-lite"/>
    </source>
</evidence>
<name>RAX2_GORGO</name>
<reference key="1">
    <citation type="submission" date="2006-08" db="EMBL/GenBank/DDBJ databases">
        <title>Positive selection in transcription factor genes on the human lineage.</title>
        <authorList>
            <person name="Nickel G.C."/>
            <person name="Tefft D.L."/>
            <person name="Trevarthen K."/>
            <person name="Funt J."/>
            <person name="Adams M.D."/>
        </authorList>
    </citation>
    <scope>NUCLEOTIDE SEQUENCE [GENOMIC DNA]</scope>
</reference>
<organism>
    <name type="scientific">Gorilla gorilla gorilla</name>
    <name type="common">Western lowland gorilla</name>
    <dbReference type="NCBI Taxonomy" id="9595"/>
    <lineage>
        <taxon>Eukaryota</taxon>
        <taxon>Metazoa</taxon>
        <taxon>Chordata</taxon>
        <taxon>Craniata</taxon>
        <taxon>Vertebrata</taxon>
        <taxon>Euteleostomi</taxon>
        <taxon>Mammalia</taxon>
        <taxon>Eutheria</taxon>
        <taxon>Euarchontoglires</taxon>
        <taxon>Primates</taxon>
        <taxon>Haplorrhini</taxon>
        <taxon>Catarrhini</taxon>
        <taxon>Hominidae</taxon>
        <taxon>Gorilla</taxon>
    </lineage>
</organism>
<protein>
    <recommendedName>
        <fullName>Retina and anterior neural fold homeobox protein 2</fullName>
    </recommendedName>
    <alternativeName>
        <fullName>Retina and anterior neural fold homeobox-like protein 1</fullName>
    </alternativeName>
</protein>
<comment type="function">
    <text evidence="1">May be involved in modulating the expression of photoreceptor specific genes. Binds to the Ret-1 and Bat-1 element within the rhodopsin promoter (By similarity).</text>
</comment>
<comment type="subunit">
    <text evidence="1">Interacts with CRX.</text>
</comment>
<comment type="subcellular location">
    <subcellularLocation>
        <location evidence="2">Nucleus</location>
    </subcellularLocation>
</comment>
<comment type="domain">
    <text evidence="1">The Homeobox transactivates the Ret-1 element in the presence of CRX and NRL.</text>
</comment>
<proteinExistence type="inferred from homology"/>